<dbReference type="EMBL" id="U40214">
    <property type="protein sequence ID" value="AAA91230.1"/>
    <property type="status" value="ALT_FRAME"/>
    <property type="molecule type" value="mRNA"/>
</dbReference>
<dbReference type="EMBL" id="AE014298">
    <property type="protein sequence ID" value="AAF45734.1"/>
    <property type="molecule type" value="Genomic_DNA"/>
</dbReference>
<dbReference type="EMBL" id="AE014298">
    <property type="protein sequence ID" value="AAF45735.2"/>
    <property type="molecule type" value="Genomic_DNA"/>
</dbReference>
<dbReference type="EMBL" id="Z98269">
    <property type="protein sequence ID" value="CAB10973.1"/>
    <property type="molecule type" value="Genomic_DNA"/>
</dbReference>
<dbReference type="EMBL" id="AY119606">
    <property type="protein sequence ID" value="AAM50260.1"/>
    <property type="status" value="ALT_FRAME"/>
    <property type="molecule type" value="mRNA"/>
</dbReference>
<dbReference type="PIR" id="T13349">
    <property type="entry name" value="T13349"/>
</dbReference>
<dbReference type="PIR" id="T13610">
    <property type="entry name" value="T13610"/>
</dbReference>
<dbReference type="RefSeq" id="NP_001284804.1">
    <molecule id="Q9W517-1"/>
    <property type="nucleotide sequence ID" value="NM_001297875.1"/>
</dbReference>
<dbReference type="RefSeq" id="NP_525042.2">
    <molecule id="Q9W517-1"/>
    <property type="nucleotide sequence ID" value="NM_080303.3"/>
</dbReference>
<dbReference type="RefSeq" id="NP_726796.2">
    <molecule id="Q9W517-2"/>
    <property type="nucleotide sequence ID" value="NM_166931.2"/>
</dbReference>
<dbReference type="SMR" id="Q9W517"/>
<dbReference type="BioGRID" id="57728">
    <property type="interactions" value="2"/>
</dbReference>
<dbReference type="FunCoup" id="Q9W517">
    <property type="interactions" value="642"/>
</dbReference>
<dbReference type="IntAct" id="Q9W517">
    <property type="interactions" value="1"/>
</dbReference>
<dbReference type="STRING" id="7227.FBpp0310572"/>
<dbReference type="GlyGen" id="Q9W517">
    <property type="glycosylation" value="4 sites"/>
</dbReference>
<dbReference type="iPTMnet" id="Q9W517"/>
<dbReference type="PaxDb" id="7227-FBpp0070413"/>
<dbReference type="EnsemblMetazoa" id="FBtr0070429">
    <molecule id="Q9W517-1"/>
    <property type="protein sequence ID" value="FBpp0070413"/>
    <property type="gene ID" value="FBgn0004655"/>
</dbReference>
<dbReference type="EnsemblMetazoa" id="FBtr0070430">
    <molecule id="Q9W517-2"/>
    <property type="protein sequence ID" value="FBpp0070414"/>
    <property type="gene ID" value="FBgn0004655"/>
</dbReference>
<dbReference type="EnsemblMetazoa" id="FBtr0344159">
    <molecule id="Q9W517-1"/>
    <property type="protein sequence ID" value="FBpp0310572"/>
    <property type="gene ID" value="FBgn0004655"/>
</dbReference>
<dbReference type="GeneID" id="31187"/>
<dbReference type="KEGG" id="dme:Dmel_CG3707"/>
<dbReference type="AGR" id="FB:FBgn0004655"/>
<dbReference type="CTD" id="23063"/>
<dbReference type="FlyBase" id="FBgn0004655">
    <property type="gene designation" value="wapl"/>
</dbReference>
<dbReference type="VEuPathDB" id="VectorBase:FBgn0004655"/>
<dbReference type="eggNOG" id="KOG2152">
    <property type="taxonomic scope" value="Eukaryota"/>
</dbReference>
<dbReference type="GeneTree" id="ENSGT00390000015768"/>
<dbReference type="HOGENOM" id="CLU_001745_0_0_1"/>
<dbReference type="InParanoid" id="Q9W517"/>
<dbReference type="OMA" id="DHDPNDM"/>
<dbReference type="OrthoDB" id="78088at2759"/>
<dbReference type="PhylomeDB" id="Q9W517"/>
<dbReference type="Reactome" id="R-DME-2468052">
    <property type="pathway name" value="Establishment of Sister Chromatid Cohesion"/>
</dbReference>
<dbReference type="Reactome" id="R-DME-2470946">
    <property type="pathway name" value="Cohesin Loading onto Chromatin"/>
</dbReference>
<dbReference type="Reactome" id="R-DME-2500257">
    <property type="pathway name" value="Resolution of Sister Chromatid Cohesion"/>
</dbReference>
<dbReference type="BioGRID-ORCS" id="31187">
    <property type="hits" value="0 hits in 1 CRISPR screen"/>
</dbReference>
<dbReference type="CD-CODE" id="58FDC23F">
    <property type="entry name" value="PcG body"/>
</dbReference>
<dbReference type="GenomeRNAi" id="31187"/>
<dbReference type="PRO" id="PR:Q9W517"/>
<dbReference type="Proteomes" id="UP000000803">
    <property type="component" value="Chromosome X"/>
</dbReference>
<dbReference type="Bgee" id="FBgn0004655">
    <property type="expression patterns" value="Expressed in cleaving embryo and 215 other cell types or tissues"/>
</dbReference>
<dbReference type="ExpressionAtlas" id="Q9W517">
    <property type="expression patterns" value="baseline and differential"/>
</dbReference>
<dbReference type="GO" id="GO:0000785">
    <property type="term" value="C:chromatin"/>
    <property type="evidence" value="ECO:0000314"/>
    <property type="project" value="FlyBase"/>
</dbReference>
<dbReference type="GO" id="GO:0005634">
    <property type="term" value="C:nucleus"/>
    <property type="evidence" value="ECO:0000314"/>
    <property type="project" value="FlyBase"/>
</dbReference>
<dbReference type="GO" id="GO:0140670">
    <property type="term" value="F:cohesin unloader activity"/>
    <property type="evidence" value="ECO:0000315"/>
    <property type="project" value="FlyBase"/>
</dbReference>
<dbReference type="GO" id="GO:0006325">
    <property type="term" value="P:chromatin organization"/>
    <property type="evidence" value="ECO:0000315"/>
    <property type="project" value="UniProtKB"/>
</dbReference>
<dbReference type="GO" id="GO:0007059">
    <property type="term" value="P:chromosome segregation"/>
    <property type="evidence" value="ECO:0007669"/>
    <property type="project" value="UniProtKB-KW"/>
</dbReference>
<dbReference type="GO" id="GO:0051321">
    <property type="term" value="P:meiotic cell cycle"/>
    <property type="evidence" value="ECO:0007669"/>
    <property type="project" value="UniProtKB-KW"/>
</dbReference>
<dbReference type="GO" id="GO:0007062">
    <property type="term" value="P:sister chromatid cohesion"/>
    <property type="evidence" value="ECO:0000315"/>
    <property type="project" value="FlyBase"/>
</dbReference>
<dbReference type="FunFam" id="1.25.10.10:FF:000374">
    <property type="entry name" value="Protein wings apart-like"/>
    <property type="match status" value="1"/>
</dbReference>
<dbReference type="Gene3D" id="1.25.10.10">
    <property type="entry name" value="Leucine-rich Repeat Variant"/>
    <property type="match status" value="1"/>
</dbReference>
<dbReference type="InterPro" id="IPR011989">
    <property type="entry name" value="ARM-like"/>
</dbReference>
<dbReference type="InterPro" id="IPR016024">
    <property type="entry name" value="ARM-type_fold"/>
</dbReference>
<dbReference type="InterPro" id="IPR039874">
    <property type="entry name" value="WAPL"/>
</dbReference>
<dbReference type="InterPro" id="IPR022771">
    <property type="entry name" value="WAPL_C"/>
</dbReference>
<dbReference type="InterPro" id="IPR012502">
    <property type="entry name" value="WAPL_dom"/>
</dbReference>
<dbReference type="PANTHER" id="PTHR22100">
    <property type="entry name" value="WINGS APART-LIKE PROTEIN HOMOLOG"/>
    <property type="match status" value="1"/>
</dbReference>
<dbReference type="PANTHER" id="PTHR22100:SF13">
    <property type="entry name" value="WINGS APART-LIKE PROTEIN HOMOLOG"/>
    <property type="match status" value="1"/>
</dbReference>
<dbReference type="Pfam" id="PF07814">
    <property type="entry name" value="WAPL"/>
    <property type="match status" value="1"/>
</dbReference>
<dbReference type="SUPFAM" id="SSF48371">
    <property type="entry name" value="ARM repeat"/>
    <property type="match status" value="1"/>
</dbReference>
<dbReference type="PROSITE" id="PS51271">
    <property type="entry name" value="WAPL"/>
    <property type="match status" value="1"/>
</dbReference>
<organism>
    <name type="scientific">Drosophila melanogaster</name>
    <name type="common">Fruit fly</name>
    <dbReference type="NCBI Taxonomy" id="7227"/>
    <lineage>
        <taxon>Eukaryota</taxon>
        <taxon>Metazoa</taxon>
        <taxon>Ecdysozoa</taxon>
        <taxon>Arthropoda</taxon>
        <taxon>Hexapoda</taxon>
        <taxon>Insecta</taxon>
        <taxon>Pterygota</taxon>
        <taxon>Neoptera</taxon>
        <taxon>Endopterygota</taxon>
        <taxon>Diptera</taxon>
        <taxon>Brachycera</taxon>
        <taxon>Muscomorpha</taxon>
        <taxon>Ephydroidea</taxon>
        <taxon>Drosophilidae</taxon>
        <taxon>Drosophila</taxon>
        <taxon>Sophophora</taxon>
    </lineage>
</organism>
<name>WAPL_DROME</name>
<keyword id="KW-0025">Alternative splicing</keyword>
<keyword id="KW-0159">Chromosome partition</keyword>
<keyword id="KW-0469">Meiosis</keyword>
<keyword id="KW-0597">Phosphoprotein</keyword>
<keyword id="KW-1185">Reference proteome</keyword>
<gene>
    <name evidence="12" type="primary">wapl</name>
    <name evidence="9" type="synonym">pasc</name>
    <name type="ORF">CG3707</name>
</gene>
<evidence type="ECO:0000255" key="1">
    <source>
        <dbReference type="PROSITE-ProRule" id="PRU00603"/>
    </source>
</evidence>
<evidence type="ECO:0000256" key="2">
    <source>
        <dbReference type="SAM" id="MobiDB-lite"/>
    </source>
</evidence>
<evidence type="ECO:0000269" key="3">
    <source>
    </source>
</evidence>
<evidence type="ECO:0000269" key="4">
    <source>
    </source>
</evidence>
<evidence type="ECO:0000269" key="5">
    <source>
    </source>
</evidence>
<evidence type="ECO:0000269" key="6">
    <source>
    </source>
</evidence>
<evidence type="ECO:0000269" key="7">
    <source>
    </source>
</evidence>
<evidence type="ECO:0000303" key="8">
    <source>
    </source>
</evidence>
<evidence type="ECO:0000303" key="9">
    <source>
    </source>
</evidence>
<evidence type="ECO:0000305" key="10"/>
<evidence type="ECO:0000312" key="11">
    <source>
        <dbReference type="EMBL" id="AAA91230.1"/>
    </source>
</evidence>
<evidence type="ECO:0000312" key="12">
    <source>
        <dbReference type="EMBL" id="AAF45734.1"/>
    </source>
</evidence>
<evidence type="ECO:0000312" key="13">
    <source>
        <dbReference type="EMBL" id="AAM50260.1"/>
    </source>
</evidence>
<evidence type="ECO:0000312" key="14">
    <source>
        <dbReference type="EMBL" id="CAB10973.1"/>
    </source>
</evidence>
<comment type="function">
    <text evidence="5">Has a role in female meiotic chromosome segregation in females; proximal heterochromatin is involved in chromosome pairing during female meiosis. Is a dominant suppressor of both white and Stubble position-effect variegation (PEV), while it is a weak enhancer of brown variegation.</text>
</comment>
<comment type="alternative products">
    <event type="alternative splicing"/>
    <isoform>
        <id>Q9W517-1</id>
        <name evidence="5">A</name>
        <sequence type="displayed"/>
    </isoform>
    <isoform>
        <id>Q9W517-2</id>
        <name evidence="8">B</name>
        <sequence type="described" ref="VSP_051920"/>
    </isoform>
</comment>
<comment type="developmental stage">
    <text evidence="5">Expressed in embryos.</text>
</comment>
<comment type="disruption phenotype">
    <text evidence="5">Flies exhibit brain cell metaphases where sister chromatids of all chromosomes are aligned parallel to each other instead of assuming the typical morphology, heterochromatin condensation or chromosome segregation are not affected.</text>
</comment>
<comment type="similarity">
    <text evidence="10">Belongs to the WAPL family.</text>
</comment>
<comment type="sequence caution" evidence="10">
    <conflict type="frameshift">
        <sequence resource="EMBL-CDS" id="AAA91230"/>
    </conflict>
</comment>
<comment type="sequence caution" evidence="10">
    <conflict type="frameshift">
        <sequence resource="EMBL-CDS" id="AAM50260"/>
    </conflict>
</comment>
<proteinExistence type="evidence at protein level"/>
<protein>
    <recommendedName>
        <fullName>Protein wings apart-like</fullName>
    </recommendedName>
    <alternativeName>
        <fullName>Protein parallel sister chromatids</fullName>
    </alternativeName>
</protein>
<feature type="chain" id="PRO_0000076364" description="Protein wings apart-like">
    <location>
        <begin position="1"/>
        <end position="1741"/>
    </location>
</feature>
<feature type="domain" description="WAPL" evidence="1">
    <location>
        <begin position="1140"/>
        <end position="1648"/>
    </location>
</feature>
<feature type="region of interest" description="Disordered" evidence="2">
    <location>
        <begin position="68"/>
        <end position="100"/>
    </location>
</feature>
<feature type="region of interest" description="Disordered" evidence="2">
    <location>
        <begin position="119"/>
        <end position="277"/>
    </location>
</feature>
<feature type="region of interest" description="Disordered" evidence="2">
    <location>
        <begin position="291"/>
        <end position="472"/>
    </location>
</feature>
<feature type="region of interest" description="Disordered" evidence="2">
    <location>
        <begin position="490"/>
        <end position="612"/>
    </location>
</feature>
<feature type="region of interest" description="Disordered" evidence="2">
    <location>
        <begin position="675"/>
        <end position="810"/>
    </location>
</feature>
<feature type="region of interest" description="Disordered" evidence="2">
    <location>
        <begin position="823"/>
        <end position="963"/>
    </location>
</feature>
<feature type="region of interest" description="Disordered" evidence="2">
    <location>
        <begin position="1038"/>
        <end position="1068"/>
    </location>
</feature>
<feature type="region of interest" description="Disordered" evidence="2">
    <location>
        <begin position="1112"/>
        <end position="1141"/>
    </location>
</feature>
<feature type="region of interest" description="Disordered" evidence="2">
    <location>
        <begin position="1708"/>
        <end position="1741"/>
    </location>
</feature>
<feature type="compositionally biased region" description="Basic residues" evidence="2">
    <location>
        <begin position="165"/>
        <end position="174"/>
    </location>
</feature>
<feature type="compositionally biased region" description="Low complexity" evidence="2">
    <location>
        <begin position="175"/>
        <end position="185"/>
    </location>
</feature>
<feature type="compositionally biased region" description="Low complexity" evidence="2">
    <location>
        <begin position="309"/>
        <end position="334"/>
    </location>
</feature>
<feature type="compositionally biased region" description="Polar residues" evidence="2">
    <location>
        <begin position="367"/>
        <end position="377"/>
    </location>
</feature>
<feature type="compositionally biased region" description="Low complexity" evidence="2">
    <location>
        <begin position="408"/>
        <end position="426"/>
    </location>
</feature>
<feature type="compositionally biased region" description="Acidic residues" evidence="2">
    <location>
        <begin position="438"/>
        <end position="456"/>
    </location>
</feature>
<feature type="compositionally biased region" description="Basic residues" evidence="2">
    <location>
        <begin position="503"/>
        <end position="512"/>
    </location>
</feature>
<feature type="compositionally biased region" description="Low complexity" evidence="2">
    <location>
        <begin position="515"/>
        <end position="529"/>
    </location>
</feature>
<feature type="compositionally biased region" description="Low complexity" evidence="2">
    <location>
        <begin position="553"/>
        <end position="568"/>
    </location>
</feature>
<feature type="compositionally biased region" description="Polar residues" evidence="2">
    <location>
        <begin position="586"/>
        <end position="604"/>
    </location>
</feature>
<feature type="compositionally biased region" description="Low complexity" evidence="2">
    <location>
        <begin position="796"/>
        <end position="810"/>
    </location>
</feature>
<feature type="compositionally biased region" description="Low complexity" evidence="2">
    <location>
        <begin position="849"/>
        <end position="859"/>
    </location>
</feature>
<feature type="compositionally biased region" description="Acidic residues" evidence="2">
    <location>
        <begin position="860"/>
        <end position="873"/>
    </location>
</feature>
<feature type="compositionally biased region" description="Basic and acidic residues" evidence="2">
    <location>
        <begin position="880"/>
        <end position="894"/>
    </location>
</feature>
<feature type="compositionally biased region" description="Low complexity" evidence="2">
    <location>
        <begin position="939"/>
        <end position="952"/>
    </location>
</feature>
<feature type="compositionally biased region" description="Low complexity" evidence="2">
    <location>
        <begin position="1047"/>
        <end position="1065"/>
    </location>
</feature>
<feature type="compositionally biased region" description="Gly residues" evidence="2">
    <location>
        <begin position="1117"/>
        <end position="1136"/>
    </location>
</feature>
<feature type="compositionally biased region" description="Low complexity" evidence="2">
    <location>
        <begin position="1708"/>
        <end position="1730"/>
    </location>
</feature>
<feature type="modified residue" description="Phosphothreonine" evidence="7">
    <location>
        <position position="258"/>
    </location>
</feature>
<feature type="modified residue" description="Phosphoserine" evidence="7">
    <location>
        <position position="355"/>
    </location>
</feature>
<feature type="modified residue" description="Phosphoserine" evidence="7">
    <location>
        <position position="888"/>
    </location>
</feature>
<feature type="splice variant" id="VSP_051920" description="In isoform B." evidence="8">
    <location>
        <begin position="1"/>
        <end position="649"/>
    </location>
</feature>
<feature type="sequence conflict" description="In Ref. 5; AAM50260." evidence="10" ref="5">
    <original>W</original>
    <variation>L</variation>
    <location>
        <position position="37"/>
    </location>
</feature>
<feature type="sequence conflict" description="In Ref. 4; CAB10973." evidence="10" ref="4">
    <original>A</original>
    <variation>V</variation>
    <location>
        <position position="135"/>
    </location>
</feature>
<feature type="sequence conflict" description="In Ref. 4; CAB10973." evidence="10" ref="4">
    <original>T</original>
    <variation>M</variation>
    <location>
        <position position="772"/>
    </location>
</feature>
<feature type="sequence conflict" description="In Ref. 4; CAB10973." evidence="10" ref="4">
    <original>A</original>
    <variation>T</variation>
    <location>
        <position position="950"/>
    </location>
</feature>
<feature type="sequence conflict" description="In Ref. 4; CAB10973." evidence="10" ref="4">
    <original>V</original>
    <variation>I</variation>
    <location>
        <position position="1137"/>
    </location>
</feature>
<feature type="sequence conflict" description="In Ref. 1; AAA91230." evidence="10" ref="1">
    <original>ST</original>
    <variation>RL</variation>
    <location>
        <begin position="1270"/>
        <end position="1271"/>
    </location>
</feature>
<feature type="sequence conflict" description="In Ref. 4; CAB10973." evidence="10" ref="4">
    <original>P</original>
    <variation>S</variation>
    <location>
        <position position="1276"/>
    </location>
</feature>
<feature type="sequence conflict" description="In Ref. 4; CAB10973." evidence="10" ref="4">
    <original>T</original>
    <variation>S</variation>
    <location>
        <position position="1708"/>
    </location>
</feature>
<sequence length="1741" mass="185156">MSRWGKNIVVPLDSLCKEKENTNRPTVARSVGTVGKWGKMGFTSTRTYTLPAIHPMAAAAAAAAAAASPSQSPASTQDHDPNDLSVSVPEPPKPKKFFKSRNTAPPEVIAQIIQQLPHCGAGASPMRDHFSSAGAGAGGLTPTSGAQEAGGVKLKPGKGASSAERKRKSPKKKAATTSASTPSTPGAFYGASDRDGDGLSDPASEQPEQPSSASGKQKQKKPKEEKKLKPEAPPSRVLGRARKAVNYREVDEDERYPTPTKDLIIPKAGRQPAEVAATATLAAASSEAFISSTFGSPGSEPSLPPPTSAPSASASTSSQLPSASGSASNPPSASRTPEHPPIVLRISKGTSRLVSTDSEEPPSSSPAHQNQLNQLSVTEEEPAERSGDETVPASTPKITVKPLRPPTAADSVDGSSAAVGGASAGDSFEERKSQSLEPNEDEEEEEEEEDEEEEPPEINYCTVKISPDKPPKERLKLIIKTDVIRNAIAKAAAAAESRSEKKSRSKKHKHKQLLAAGSGAAPASGATPAEINSEFKTPSPHLALSEANSQQAQHTPSHLHQLHQLHPQRGSAVISPTTRSDHDFDSQSSVLGSISSKGNSTPQLLAQAVQEDSCVIRSRGSSVITSDLETSQHSSLVAPPSDIESRLESMMMTIDGAGTGAASAVPETPLQEDILAVLRGEVPRLNGNTDPEPTEEEDQQQQPKRATRGRGRKANNNVDVTPPATETRTRGRAKGADATTAAISPPTGKRNTRGTRGSRKAEQEVDMEVDETAMTTVPANEEQLEQATLPPRRGRNAAARANNNNLASVNNNINKIAANLSAKAEASRLAEGGVAGGAARSYGRKRKNQQVTQVLQQEPVPEEQETPDAEEEQPTPAKIPHTDHREHSPDHDPDPDPDELSNNSNNSSLQHDGSSSSPPPRDFKFKDKFKRTLTLDTQGAANAGAGGAAAAAPPESSGEQRGAVKLVISKKKGSIFKSRALVPSDQAEQATVAKRHLYKHSWDAALEANGGGTNSDASNASASGVGVAGAKDHLHHLAAGKSDGDFGDSPSSNNNGSSSACSSASTLRGDSPALGKISRLAGKQGVPATSTSSDAFDLDLEPIAGELDLERSAAGASAGGTGATTGGGGATGGGGPVRVDRKTKDYYPVVRNVKTAHQIQEIGEYQEMDDDVEYILDALQPHNPPATRCLSALQLAAKCMMPAFRMHVRAHGVVTKFFKALSDANKDLSLGLCTSAIMYILSQEGLNMDLDRDSLELMINLLEADGVGGSTETGHPDRAGYDRNKQKVRELCEEIKAQGKGTHLNVDSLTVGTLAMETLLSLTSKRAGEWFKEDLRKLGGLEHIIKTISDFCRPVIACDTEIDWQPTLLDNMQTVARCLRVLENVTQHNETNQRYMLTSGQGKAVETLCQLYRLCSRQIMLHPSDGGGSNKEHPGVAMRELLVPVLKVLINLTHTFNEAQPSLGAELLGQRGDVVETSFRLLLLSANYIPDQCVFELSILVLTLLINLCMHTVPNRAALMQAAAPAEYVADNPPAQGSVSALQALLEYFYKCEELARLVEKNTDAFLESNEKGKKKQEEVEETVNNLVQRAGHHMEHTLKGSYAAILVGNLIADNELYESVVRRQLRGNSFKEIIGVLEKYHTFMNLTSSLEAAFVAHMKSTKRIIDNFKKRDYIYEHSDEHDNPLPLNLETTAQVLAVGADASHAATSSTTVGSGSAPSSTSATGTTRAPRVYKTYSSHR</sequence>
<reference evidence="10 11" key="1">
    <citation type="journal article" date="2000" name="Genetics">
        <title>Genetic and molecular analysis of wings apart-like (wapl), a gene controlling heterochromatin organization in Drosophila melanogaster.</title>
        <authorList>
            <person name="Verni F."/>
            <person name="Gandhi R."/>
            <person name="Goldberg M.L."/>
            <person name="Gatti M."/>
        </authorList>
    </citation>
    <scope>NUCLEOTIDE SEQUENCE [MRNA] (ISOFORM A)</scope>
    <scope>FUNCTION</scope>
    <scope>DEVELOPMENTAL STAGE</scope>
    <scope>DISRUPTION PHENOTYPE</scope>
    <source>
        <tissue evidence="5">Embryo</tissue>
        <tissue>Imaginal disk</tissue>
    </source>
</reference>
<reference evidence="12" key="2">
    <citation type="journal article" date="2000" name="Science">
        <title>The genome sequence of Drosophila melanogaster.</title>
        <authorList>
            <person name="Adams M.D."/>
            <person name="Celniker S.E."/>
            <person name="Holt R.A."/>
            <person name="Evans C.A."/>
            <person name="Gocayne J.D."/>
            <person name="Amanatides P.G."/>
            <person name="Scherer S.E."/>
            <person name="Li P.W."/>
            <person name="Hoskins R.A."/>
            <person name="Galle R.F."/>
            <person name="George R.A."/>
            <person name="Lewis S.E."/>
            <person name="Richards S."/>
            <person name="Ashburner M."/>
            <person name="Henderson S.N."/>
            <person name="Sutton G.G."/>
            <person name="Wortman J.R."/>
            <person name="Yandell M.D."/>
            <person name="Zhang Q."/>
            <person name="Chen L.X."/>
            <person name="Brandon R.C."/>
            <person name="Rogers Y.-H.C."/>
            <person name="Blazej R.G."/>
            <person name="Champe M."/>
            <person name="Pfeiffer B.D."/>
            <person name="Wan K.H."/>
            <person name="Doyle C."/>
            <person name="Baxter E.G."/>
            <person name="Helt G."/>
            <person name="Nelson C.R."/>
            <person name="Miklos G.L.G."/>
            <person name="Abril J.F."/>
            <person name="Agbayani A."/>
            <person name="An H.-J."/>
            <person name="Andrews-Pfannkoch C."/>
            <person name="Baldwin D."/>
            <person name="Ballew R.M."/>
            <person name="Basu A."/>
            <person name="Baxendale J."/>
            <person name="Bayraktaroglu L."/>
            <person name="Beasley E.M."/>
            <person name="Beeson K.Y."/>
            <person name="Benos P.V."/>
            <person name="Berman B.P."/>
            <person name="Bhandari D."/>
            <person name="Bolshakov S."/>
            <person name="Borkova D."/>
            <person name="Botchan M.R."/>
            <person name="Bouck J."/>
            <person name="Brokstein P."/>
            <person name="Brottier P."/>
            <person name="Burtis K.C."/>
            <person name="Busam D.A."/>
            <person name="Butler H."/>
            <person name="Cadieu E."/>
            <person name="Center A."/>
            <person name="Chandra I."/>
            <person name="Cherry J.M."/>
            <person name="Cawley S."/>
            <person name="Dahlke C."/>
            <person name="Davenport L.B."/>
            <person name="Davies P."/>
            <person name="de Pablos B."/>
            <person name="Delcher A."/>
            <person name="Deng Z."/>
            <person name="Mays A.D."/>
            <person name="Dew I."/>
            <person name="Dietz S.M."/>
            <person name="Dodson K."/>
            <person name="Doup L.E."/>
            <person name="Downes M."/>
            <person name="Dugan-Rocha S."/>
            <person name="Dunkov B.C."/>
            <person name="Dunn P."/>
            <person name="Durbin K.J."/>
            <person name="Evangelista C.C."/>
            <person name="Ferraz C."/>
            <person name="Ferriera S."/>
            <person name="Fleischmann W."/>
            <person name="Fosler C."/>
            <person name="Gabrielian A.E."/>
            <person name="Garg N.S."/>
            <person name="Gelbart W.M."/>
            <person name="Glasser K."/>
            <person name="Glodek A."/>
            <person name="Gong F."/>
            <person name="Gorrell J.H."/>
            <person name="Gu Z."/>
            <person name="Guan P."/>
            <person name="Harris M."/>
            <person name="Harris N.L."/>
            <person name="Harvey D.A."/>
            <person name="Heiman T.J."/>
            <person name="Hernandez J.R."/>
            <person name="Houck J."/>
            <person name="Hostin D."/>
            <person name="Houston K.A."/>
            <person name="Howland T.J."/>
            <person name="Wei M.-H."/>
            <person name="Ibegwam C."/>
            <person name="Jalali M."/>
            <person name="Kalush F."/>
            <person name="Karpen G.H."/>
            <person name="Ke Z."/>
            <person name="Kennison J.A."/>
            <person name="Ketchum K.A."/>
            <person name="Kimmel B.E."/>
            <person name="Kodira C.D."/>
            <person name="Kraft C.L."/>
            <person name="Kravitz S."/>
            <person name="Kulp D."/>
            <person name="Lai Z."/>
            <person name="Lasko P."/>
            <person name="Lei Y."/>
            <person name="Levitsky A.A."/>
            <person name="Li J.H."/>
            <person name="Li Z."/>
            <person name="Liang Y."/>
            <person name="Lin X."/>
            <person name="Liu X."/>
            <person name="Mattei B."/>
            <person name="McIntosh T.C."/>
            <person name="McLeod M.P."/>
            <person name="McPherson D."/>
            <person name="Merkulov G."/>
            <person name="Milshina N.V."/>
            <person name="Mobarry C."/>
            <person name="Morris J."/>
            <person name="Moshrefi A."/>
            <person name="Mount S.M."/>
            <person name="Moy M."/>
            <person name="Murphy B."/>
            <person name="Murphy L."/>
            <person name="Muzny D.M."/>
            <person name="Nelson D.L."/>
            <person name="Nelson D.R."/>
            <person name="Nelson K.A."/>
            <person name="Nixon K."/>
            <person name="Nusskern D.R."/>
            <person name="Pacleb J.M."/>
            <person name="Palazzolo M."/>
            <person name="Pittman G.S."/>
            <person name="Pan S."/>
            <person name="Pollard J."/>
            <person name="Puri V."/>
            <person name="Reese M.G."/>
            <person name="Reinert K."/>
            <person name="Remington K."/>
            <person name="Saunders R.D.C."/>
            <person name="Scheeler F."/>
            <person name="Shen H."/>
            <person name="Shue B.C."/>
            <person name="Siden-Kiamos I."/>
            <person name="Simpson M."/>
            <person name="Skupski M.P."/>
            <person name="Smith T.J."/>
            <person name="Spier E."/>
            <person name="Spradling A.C."/>
            <person name="Stapleton M."/>
            <person name="Strong R."/>
            <person name="Sun E."/>
            <person name="Svirskas R."/>
            <person name="Tector C."/>
            <person name="Turner R."/>
            <person name="Venter E."/>
            <person name="Wang A.H."/>
            <person name="Wang X."/>
            <person name="Wang Z.-Y."/>
            <person name="Wassarman D.A."/>
            <person name="Weinstock G.M."/>
            <person name="Weissenbach J."/>
            <person name="Williams S.M."/>
            <person name="Woodage T."/>
            <person name="Worley K.C."/>
            <person name="Wu D."/>
            <person name="Yang S."/>
            <person name="Yao Q.A."/>
            <person name="Ye J."/>
            <person name="Yeh R.-F."/>
            <person name="Zaveri J.S."/>
            <person name="Zhan M."/>
            <person name="Zhang G."/>
            <person name="Zhao Q."/>
            <person name="Zheng L."/>
            <person name="Zheng X.H."/>
            <person name="Zhong F.N."/>
            <person name="Zhong W."/>
            <person name="Zhou X."/>
            <person name="Zhu S.C."/>
            <person name="Zhu X."/>
            <person name="Smith H.O."/>
            <person name="Gibbs R.A."/>
            <person name="Myers E.W."/>
            <person name="Rubin G.M."/>
            <person name="Venter J.C."/>
        </authorList>
    </citation>
    <scope>NUCLEOTIDE SEQUENCE [LARGE SCALE GENOMIC DNA]</scope>
    <source>
        <strain evidence="3">Berkeley</strain>
    </source>
</reference>
<reference evidence="10 12" key="3">
    <citation type="journal article" date="2002" name="Genome Biol.">
        <title>Annotation of the Drosophila melanogaster euchromatic genome: a systematic review.</title>
        <authorList>
            <person name="Misra S."/>
            <person name="Crosby M.A."/>
            <person name="Mungall C.J."/>
            <person name="Matthews B.B."/>
            <person name="Campbell K.S."/>
            <person name="Hradecky P."/>
            <person name="Huang Y."/>
            <person name="Kaminker J.S."/>
            <person name="Millburn G.H."/>
            <person name="Prochnik S.E."/>
            <person name="Smith C.D."/>
            <person name="Tupy J.L."/>
            <person name="Whitfield E.J."/>
            <person name="Bayraktaroglu L."/>
            <person name="Berman B.P."/>
            <person name="Bettencourt B.R."/>
            <person name="Celniker S.E."/>
            <person name="de Grey A.D.N.J."/>
            <person name="Drysdale R.A."/>
            <person name="Harris N.L."/>
            <person name="Richter J."/>
            <person name="Russo S."/>
            <person name="Schroeder A.J."/>
            <person name="Shu S.Q."/>
            <person name="Stapleton M."/>
            <person name="Yamada C."/>
            <person name="Ashburner M."/>
            <person name="Gelbart W.M."/>
            <person name="Rubin G.M."/>
            <person name="Lewis S.E."/>
        </authorList>
    </citation>
    <scope>GENOME REANNOTATION</scope>
    <scope>ALTERNATIVE SPLICING</scope>
    <source>
        <strain>Berkeley</strain>
    </source>
</reference>
<reference evidence="10 14" key="4">
    <citation type="journal article" date="2000" name="Science">
        <title>From sequence to chromosome: the tip of the X chromosome of D. melanogaster.</title>
        <authorList>
            <person name="Benos P.V."/>
            <person name="Gatt M.K."/>
            <person name="Ashburner M."/>
            <person name="Murphy L."/>
            <person name="Harris D."/>
            <person name="Barrell B.G."/>
            <person name="Ferraz C."/>
            <person name="Vidal S."/>
            <person name="Brun C."/>
            <person name="Demailles J."/>
            <person name="Cadieu E."/>
            <person name="Dreano S."/>
            <person name="Gloux S."/>
            <person name="Lelaure V."/>
            <person name="Mottier S."/>
            <person name="Galibert F."/>
            <person name="Borkova D."/>
            <person name="Minana B."/>
            <person name="Kafatos F.C."/>
            <person name="Louis C."/>
            <person name="Siden-Kiamos I."/>
            <person name="Bolshakov S."/>
            <person name="Papagiannakis G."/>
            <person name="Spanos L."/>
            <person name="Cox S."/>
            <person name="Madueno E."/>
            <person name="de Pablos B."/>
            <person name="Modolell J."/>
            <person name="Peter A."/>
            <person name="Schoettler P."/>
            <person name="Werner M."/>
            <person name="Mourkioti F."/>
            <person name="Beinert N."/>
            <person name="Dowe G."/>
            <person name="Schaefer U."/>
            <person name="Jaeckle H."/>
            <person name="Bucheton A."/>
            <person name="Callister D.M."/>
            <person name="Campbell L.A."/>
            <person name="Darlamitsou A."/>
            <person name="Henderson N.S."/>
            <person name="McMillan P.J."/>
            <person name="Salles C."/>
            <person name="Tait E.A."/>
            <person name="Valenti P."/>
            <person name="Saunders R.D.C."/>
            <person name="Glover D.M."/>
        </authorList>
    </citation>
    <scope>NUCLEOTIDE SEQUENCE [LARGE SCALE GENOMIC DNA]</scope>
    <source>
        <strain evidence="4">Oregon-R</strain>
    </source>
</reference>
<reference evidence="10 13" key="5">
    <citation type="journal article" date="2002" name="Genome Biol.">
        <title>A Drosophila full-length cDNA resource.</title>
        <authorList>
            <person name="Stapleton M."/>
            <person name="Carlson J.W."/>
            <person name="Brokstein P."/>
            <person name="Yu C."/>
            <person name="Champe M."/>
            <person name="George R.A."/>
            <person name="Guarin H."/>
            <person name="Kronmiller B."/>
            <person name="Pacleb J.M."/>
            <person name="Park S."/>
            <person name="Wan K.H."/>
            <person name="Rubin G.M."/>
            <person name="Celniker S.E."/>
        </authorList>
    </citation>
    <scope>NUCLEOTIDE SEQUENCE [LARGE SCALE MRNA] (ISOFORM A)</scope>
    <source>
        <strain evidence="13">Berkeley</strain>
        <tissue evidence="6">Embryo</tissue>
    </source>
</reference>
<reference key="6">
    <citation type="journal article" date="2008" name="J. Proteome Res.">
        <title>Phosphoproteome analysis of Drosophila melanogaster embryos.</title>
        <authorList>
            <person name="Zhai B."/>
            <person name="Villen J."/>
            <person name="Beausoleil S.A."/>
            <person name="Mintseris J."/>
            <person name="Gygi S.P."/>
        </authorList>
    </citation>
    <scope>PHOSPHORYLATION [LARGE SCALE ANALYSIS] AT THR-258; SER-355 AND SER-888</scope>
    <scope>IDENTIFICATION BY MASS SPECTROMETRY</scope>
    <source>
        <tissue>Embryo</tissue>
    </source>
</reference>
<accession>Q9W517</accession>
<accession>O46095</accession>
<accession>Q24153</accession>
<accession>Q7KVZ8</accession>
<accession>Q8MRI2</accession>
<accession>Q9W518</accession>